<name>TRPB_SALAR</name>
<proteinExistence type="inferred from homology"/>
<evidence type="ECO:0000255" key="1">
    <source>
        <dbReference type="HAMAP-Rule" id="MF_00133"/>
    </source>
</evidence>
<sequence>MTTLLNPYFGEFGGMYVPQILMPALRQLEEAFVSAQKDPEFQAQFADLLKNYAGRPTALTKCQNITAGTRTTLYLKREDLLHGGAHKTNQVLGQALLAKRMGKSEIIAETGAGQHGVASALASALLGLKCRIYMGAKDVERQSPNVFRMRLMGAQVIPVHSGSATLKDACNEALRDWSGSYETAHYMLGTAAGPHPYPTIVREFQRMIGEETKSQILDKEGRLPDAVIACVGGGSNAIGMFADFINDASVGLIGVEPGGHGIETGEHGAPLKHGRVGIYFGMKAPMMQTADGQIEESYSISAGLDFPSVGPQHAHLNSIGRADYVSITDDEALEAFKTLCRHEGIIPALESSHALAHALKMMREHPEKEQLLVVNLSGRGDKDIFTVHDILKARGEI</sequence>
<comment type="function">
    <text evidence="1">The beta subunit is responsible for the synthesis of L-tryptophan from indole and L-serine.</text>
</comment>
<comment type="catalytic activity">
    <reaction evidence="1">
        <text>(1S,2R)-1-C-(indol-3-yl)glycerol 3-phosphate + L-serine = D-glyceraldehyde 3-phosphate + L-tryptophan + H2O</text>
        <dbReference type="Rhea" id="RHEA:10532"/>
        <dbReference type="ChEBI" id="CHEBI:15377"/>
        <dbReference type="ChEBI" id="CHEBI:33384"/>
        <dbReference type="ChEBI" id="CHEBI:57912"/>
        <dbReference type="ChEBI" id="CHEBI:58866"/>
        <dbReference type="ChEBI" id="CHEBI:59776"/>
        <dbReference type="EC" id="4.2.1.20"/>
    </reaction>
</comment>
<comment type="cofactor">
    <cofactor evidence="1">
        <name>pyridoxal 5'-phosphate</name>
        <dbReference type="ChEBI" id="CHEBI:597326"/>
    </cofactor>
</comment>
<comment type="pathway">
    <text evidence="1">Amino-acid biosynthesis; L-tryptophan biosynthesis; L-tryptophan from chorismate: step 5/5.</text>
</comment>
<comment type="subunit">
    <text evidence="1">Tetramer of two alpha and two beta chains.</text>
</comment>
<comment type="similarity">
    <text evidence="1">Belongs to the TrpB family.</text>
</comment>
<dbReference type="EC" id="4.2.1.20" evidence="1"/>
<dbReference type="EMBL" id="CP000880">
    <property type="protein sequence ID" value="ABX21131.1"/>
    <property type="molecule type" value="Genomic_DNA"/>
</dbReference>
<dbReference type="SMR" id="A9MPY7"/>
<dbReference type="STRING" id="41514.SARI_01229"/>
<dbReference type="KEGG" id="ses:SARI_01229"/>
<dbReference type="HOGENOM" id="CLU_016734_3_1_6"/>
<dbReference type="UniPathway" id="UPA00035">
    <property type="reaction ID" value="UER00044"/>
</dbReference>
<dbReference type="Proteomes" id="UP000002084">
    <property type="component" value="Chromosome"/>
</dbReference>
<dbReference type="GO" id="GO:0005737">
    <property type="term" value="C:cytoplasm"/>
    <property type="evidence" value="ECO:0007669"/>
    <property type="project" value="TreeGrafter"/>
</dbReference>
<dbReference type="GO" id="GO:0004834">
    <property type="term" value="F:tryptophan synthase activity"/>
    <property type="evidence" value="ECO:0007669"/>
    <property type="project" value="UniProtKB-UniRule"/>
</dbReference>
<dbReference type="CDD" id="cd06446">
    <property type="entry name" value="Trp-synth_B"/>
    <property type="match status" value="1"/>
</dbReference>
<dbReference type="FunFam" id="3.40.50.1100:FF:000001">
    <property type="entry name" value="Tryptophan synthase beta chain"/>
    <property type="match status" value="1"/>
</dbReference>
<dbReference type="FunFam" id="3.40.50.1100:FF:000004">
    <property type="entry name" value="Tryptophan synthase beta chain"/>
    <property type="match status" value="1"/>
</dbReference>
<dbReference type="Gene3D" id="3.40.50.1100">
    <property type="match status" value="2"/>
</dbReference>
<dbReference type="HAMAP" id="MF_00133">
    <property type="entry name" value="Trp_synth_beta"/>
    <property type="match status" value="1"/>
</dbReference>
<dbReference type="InterPro" id="IPR006653">
    <property type="entry name" value="Trp_synth_b_CS"/>
</dbReference>
<dbReference type="InterPro" id="IPR006654">
    <property type="entry name" value="Trp_synth_beta"/>
</dbReference>
<dbReference type="InterPro" id="IPR023026">
    <property type="entry name" value="Trp_synth_beta/beta-like"/>
</dbReference>
<dbReference type="InterPro" id="IPR001926">
    <property type="entry name" value="TrpB-like_PALP"/>
</dbReference>
<dbReference type="InterPro" id="IPR036052">
    <property type="entry name" value="TrpB-like_PALP_sf"/>
</dbReference>
<dbReference type="NCBIfam" id="TIGR00263">
    <property type="entry name" value="trpB"/>
    <property type="match status" value="1"/>
</dbReference>
<dbReference type="PANTHER" id="PTHR48077:SF3">
    <property type="entry name" value="TRYPTOPHAN SYNTHASE"/>
    <property type="match status" value="1"/>
</dbReference>
<dbReference type="PANTHER" id="PTHR48077">
    <property type="entry name" value="TRYPTOPHAN SYNTHASE-RELATED"/>
    <property type="match status" value="1"/>
</dbReference>
<dbReference type="Pfam" id="PF00291">
    <property type="entry name" value="PALP"/>
    <property type="match status" value="1"/>
</dbReference>
<dbReference type="PIRSF" id="PIRSF001413">
    <property type="entry name" value="Trp_syn_beta"/>
    <property type="match status" value="1"/>
</dbReference>
<dbReference type="SUPFAM" id="SSF53686">
    <property type="entry name" value="Tryptophan synthase beta subunit-like PLP-dependent enzymes"/>
    <property type="match status" value="1"/>
</dbReference>
<dbReference type="PROSITE" id="PS00168">
    <property type="entry name" value="TRP_SYNTHASE_BETA"/>
    <property type="match status" value="1"/>
</dbReference>
<protein>
    <recommendedName>
        <fullName evidence="1">Tryptophan synthase beta chain</fullName>
        <ecNumber evidence="1">4.2.1.20</ecNumber>
    </recommendedName>
</protein>
<accession>A9MPY7</accession>
<gene>
    <name evidence="1" type="primary">trpB</name>
    <name type="ordered locus">SARI_01229</name>
</gene>
<organism>
    <name type="scientific">Salmonella arizonae (strain ATCC BAA-731 / CDC346-86 / RSK2980)</name>
    <dbReference type="NCBI Taxonomy" id="41514"/>
    <lineage>
        <taxon>Bacteria</taxon>
        <taxon>Pseudomonadati</taxon>
        <taxon>Pseudomonadota</taxon>
        <taxon>Gammaproteobacteria</taxon>
        <taxon>Enterobacterales</taxon>
        <taxon>Enterobacteriaceae</taxon>
        <taxon>Salmonella</taxon>
    </lineage>
</organism>
<feature type="chain" id="PRO_1000076404" description="Tryptophan synthase beta chain">
    <location>
        <begin position="1"/>
        <end position="397"/>
    </location>
</feature>
<feature type="modified residue" description="N6-(pyridoxal phosphate)lysine" evidence="1">
    <location>
        <position position="87"/>
    </location>
</feature>
<reference key="1">
    <citation type="submission" date="2007-11" db="EMBL/GenBank/DDBJ databases">
        <authorList>
            <consortium name="The Salmonella enterica serovar Arizonae Genome Sequencing Project"/>
            <person name="McClelland M."/>
            <person name="Sanderson E.K."/>
            <person name="Porwollik S."/>
            <person name="Spieth J."/>
            <person name="Clifton W.S."/>
            <person name="Fulton R."/>
            <person name="Chunyan W."/>
            <person name="Wollam A."/>
            <person name="Shah N."/>
            <person name="Pepin K."/>
            <person name="Bhonagiri V."/>
            <person name="Nash W."/>
            <person name="Johnson M."/>
            <person name="Thiruvilangam P."/>
            <person name="Wilson R."/>
        </authorList>
    </citation>
    <scope>NUCLEOTIDE SEQUENCE [LARGE SCALE GENOMIC DNA]</scope>
    <source>
        <strain>ATCC BAA-731 / CDC346-86 / RSK2980</strain>
    </source>
</reference>
<keyword id="KW-0028">Amino-acid biosynthesis</keyword>
<keyword id="KW-0057">Aromatic amino acid biosynthesis</keyword>
<keyword id="KW-0456">Lyase</keyword>
<keyword id="KW-0663">Pyridoxal phosphate</keyword>
<keyword id="KW-1185">Reference proteome</keyword>
<keyword id="KW-0822">Tryptophan biosynthesis</keyword>